<sequence length="740" mass="81126">MFKSTLPIAAAISVALTSMVLPAKALAANEAKTNQFWWPDQLSLSPLRQHGAESNPYGEQFNYAKEFASLDLAMLKKDIQTTLTDSKSWWPADWGHYGPLMIRMAWHSAGVYRVHDGRGGASGGQQRFAPLNSWPDNVNLDKARRLLWPVKQKYGRKISWADLMVLSGNVALESMGFKTFGFAGGRTDDWEPDLVYWGPETAMLSDKRRDKKGKLKGPLAAVEMGLIYVNPEGPHGKPDPLLAANDIRMSFGRMAMNDEEIVALLAGGHTLGKAHGAKKPNGCVGAEPAAADIEAQGLGWKNKCGTGVGADTISSGLEGAWTVTPTQWSSNYLDNLMNFNWVLTKSPAGAKQWIPDNKAAANLVPDAHIPNKRHAPIMFTTDIALKEDPQFRKIVERFRADPTQFDLAFAKAWFKLTHRDMGPRARYVGAEVPSEVLMWQDPIPAINYQLITDKDIKQLKKQITNSGLTTSELVRTAWAAASSHRVTDMRGGANGARINLEPQNSWAVNNPKELGKVLAKLEGIQARFNKKSAKTKVSLADVIVLGGATAIENAAAKAGNRITVPFSPGRADASQAQTNVKSFNYLKPKADGFRNFYTDDSYSSPAEMLVDKANSLGLNVPEMTVLIGGMRALDANYDASSYGVLTNNPGVLTNDFFVNLLDMKTVWSKDKSNAGIYIGHDRASGTEKWQATPVDLIFGSSSELRAIAEVYASDDADKKFINDFTKAWVKVMQLDRFDLK</sequence>
<reference key="1">
    <citation type="journal article" date="2005" name="Proc. Natl. Acad. Sci. U.S.A.">
        <title>The psychrophilic lifestyle as revealed by the genome sequence of Colwellia psychrerythraea 34H through genomic and proteomic analyses.</title>
        <authorList>
            <person name="Methe B.A."/>
            <person name="Nelson K.E."/>
            <person name="Deming J.W."/>
            <person name="Momen B."/>
            <person name="Melamud E."/>
            <person name="Zhang X."/>
            <person name="Moult J."/>
            <person name="Madupu R."/>
            <person name="Nelson W.C."/>
            <person name="Dodson R.J."/>
            <person name="Brinkac L.M."/>
            <person name="Daugherty S.C."/>
            <person name="Durkin A.S."/>
            <person name="DeBoy R.T."/>
            <person name="Kolonay J.F."/>
            <person name="Sullivan S.A."/>
            <person name="Zhou L."/>
            <person name="Davidsen T.M."/>
            <person name="Wu M."/>
            <person name="Huston A.L."/>
            <person name="Lewis M."/>
            <person name="Weaver B."/>
            <person name="Weidman J.F."/>
            <person name="Khouri H."/>
            <person name="Utterback T.R."/>
            <person name="Feldblyum T.V."/>
            <person name="Fraser C.M."/>
        </authorList>
    </citation>
    <scope>NUCLEOTIDE SEQUENCE [LARGE SCALE GENOMIC DNA]</scope>
    <source>
        <strain>34H / ATCC BAA-681</strain>
    </source>
</reference>
<protein>
    <recommendedName>
        <fullName evidence="1">Catalase-peroxidase</fullName>
        <shortName evidence="1">CP</shortName>
        <ecNumber evidence="1">1.11.1.21</ecNumber>
    </recommendedName>
    <alternativeName>
        <fullName evidence="1">Peroxidase/catalase</fullName>
    </alternativeName>
</protein>
<organism>
    <name type="scientific">Colwellia psychrerythraea (strain 34H / ATCC BAA-681)</name>
    <name type="common">Vibrio psychroerythus</name>
    <dbReference type="NCBI Taxonomy" id="167879"/>
    <lineage>
        <taxon>Bacteria</taxon>
        <taxon>Pseudomonadati</taxon>
        <taxon>Pseudomonadota</taxon>
        <taxon>Gammaproteobacteria</taxon>
        <taxon>Alteromonadales</taxon>
        <taxon>Colwelliaceae</taxon>
        <taxon>Colwellia</taxon>
    </lineage>
</organism>
<proteinExistence type="inferred from homology"/>
<accession>Q486C8</accession>
<evidence type="ECO:0000255" key="1">
    <source>
        <dbReference type="HAMAP-Rule" id="MF_01961"/>
    </source>
</evidence>
<keyword id="KW-0349">Heme</keyword>
<keyword id="KW-0376">Hydrogen peroxide</keyword>
<keyword id="KW-0408">Iron</keyword>
<keyword id="KW-0479">Metal-binding</keyword>
<keyword id="KW-0560">Oxidoreductase</keyword>
<keyword id="KW-0575">Peroxidase</keyword>
<keyword id="KW-0732">Signal</keyword>
<comment type="function">
    <text evidence="1">Bifunctional enzyme with both catalase and broad-spectrum peroxidase activity.</text>
</comment>
<comment type="catalytic activity">
    <reaction evidence="1">
        <text>H2O2 + AH2 = A + 2 H2O</text>
        <dbReference type="Rhea" id="RHEA:30275"/>
        <dbReference type="ChEBI" id="CHEBI:13193"/>
        <dbReference type="ChEBI" id="CHEBI:15377"/>
        <dbReference type="ChEBI" id="CHEBI:16240"/>
        <dbReference type="ChEBI" id="CHEBI:17499"/>
        <dbReference type="EC" id="1.11.1.21"/>
    </reaction>
</comment>
<comment type="catalytic activity">
    <reaction evidence="1">
        <text>2 H2O2 = O2 + 2 H2O</text>
        <dbReference type="Rhea" id="RHEA:20309"/>
        <dbReference type="ChEBI" id="CHEBI:15377"/>
        <dbReference type="ChEBI" id="CHEBI:15379"/>
        <dbReference type="ChEBI" id="CHEBI:16240"/>
        <dbReference type="EC" id="1.11.1.21"/>
    </reaction>
</comment>
<comment type="cofactor">
    <cofactor evidence="1">
        <name>heme b</name>
        <dbReference type="ChEBI" id="CHEBI:60344"/>
    </cofactor>
    <text evidence="1">Binds 1 heme b (iron(II)-protoporphyrin IX) group per dimer.</text>
</comment>
<comment type="subunit">
    <text evidence="1">Homodimer or homotetramer.</text>
</comment>
<comment type="PTM">
    <text evidence="1">Formation of the three residue Trp-Tyr-Met cross-link is important for the catalase, but not the peroxidase activity of the enzyme.</text>
</comment>
<comment type="similarity">
    <text evidence="1">Belongs to the peroxidase family. Peroxidase/catalase subfamily.</text>
</comment>
<gene>
    <name evidence="1" type="primary">katG</name>
    <name type="ordered locus">CPS_1344</name>
</gene>
<feature type="signal peptide" evidence="1">
    <location>
        <begin position="1"/>
        <end position="27"/>
    </location>
</feature>
<feature type="chain" id="PRO_0000354765" description="Catalase-peroxidase">
    <location>
        <begin position="28"/>
        <end position="740"/>
    </location>
</feature>
<feature type="active site" description="Proton acceptor" evidence="1">
    <location>
        <position position="107"/>
    </location>
</feature>
<feature type="binding site" description="axial binding residue" evidence="1">
    <location>
        <position position="269"/>
    </location>
    <ligand>
        <name>heme b</name>
        <dbReference type="ChEBI" id="CHEBI:60344"/>
    </ligand>
    <ligandPart>
        <name>Fe</name>
        <dbReference type="ChEBI" id="CHEBI:18248"/>
    </ligandPart>
</feature>
<feature type="site" description="Transition state stabilizer" evidence="1">
    <location>
        <position position="103"/>
    </location>
</feature>
<feature type="cross-link" description="Tryptophyl-tyrosyl-methioninium (Trp-Tyr) (with M-254)" evidence="1">
    <location>
        <begin position="106"/>
        <end position="228"/>
    </location>
</feature>
<feature type="cross-link" description="Tryptophyl-tyrosyl-methioninium (Tyr-Met) (with W-106)" evidence="1">
    <location>
        <begin position="228"/>
        <end position="254"/>
    </location>
</feature>
<name>KATG_COLP3</name>
<dbReference type="EC" id="1.11.1.21" evidence="1"/>
<dbReference type="EMBL" id="CP000083">
    <property type="protein sequence ID" value="AAZ28741.1"/>
    <property type="molecule type" value="Genomic_DNA"/>
</dbReference>
<dbReference type="RefSeq" id="WP_011042181.1">
    <property type="nucleotide sequence ID" value="NC_003910.7"/>
</dbReference>
<dbReference type="SMR" id="Q486C8"/>
<dbReference type="STRING" id="167879.CPS_1344"/>
<dbReference type="PeroxiBase" id="2698">
    <property type="entry name" value="CpsCP01"/>
</dbReference>
<dbReference type="KEGG" id="cps:CPS_1344"/>
<dbReference type="eggNOG" id="COG0376">
    <property type="taxonomic scope" value="Bacteria"/>
</dbReference>
<dbReference type="HOGENOM" id="CLU_025424_2_0_6"/>
<dbReference type="Proteomes" id="UP000000547">
    <property type="component" value="Chromosome"/>
</dbReference>
<dbReference type="GO" id="GO:0005829">
    <property type="term" value="C:cytosol"/>
    <property type="evidence" value="ECO:0007669"/>
    <property type="project" value="TreeGrafter"/>
</dbReference>
<dbReference type="GO" id="GO:0004096">
    <property type="term" value="F:catalase activity"/>
    <property type="evidence" value="ECO:0007669"/>
    <property type="project" value="UniProtKB-UniRule"/>
</dbReference>
<dbReference type="GO" id="GO:0020037">
    <property type="term" value="F:heme binding"/>
    <property type="evidence" value="ECO:0007669"/>
    <property type="project" value="InterPro"/>
</dbReference>
<dbReference type="GO" id="GO:0046872">
    <property type="term" value="F:metal ion binding"/>
    <property type="evidence" value="ECO:0007669"/>
    <property type="project" value="UniProtKB-KW"/>
</dbReference>
<dbReference type="GO" id="GO:0070301">
    <property type="term" value="P:cellular response to hydrogen peroxide"/>
    <property type="evidence" value="ECO:0007669"/>
    <property type="project" value="TreeGrafter"/>
</dbReference>
<dbReference type="GO" id="GO:0042744">
    <property type="term" value="P:hydrogen peroxide catabolic process"/>
    <property type="evidence" value="ECO:0007669"/>
    <property type="project" value="UniProtKB-KW"/>
</dbReference>
<dbReference type="CDD" id="cd00649">
    <property type="entry name" value="catalase_peroxidase_1"/>
    <property type="match status" value="1"/>
</dbReference>
<dbReference type="CDD" id="cd08200">
    <property type="entry name" value="catalase_peroxidase_2"/>
    <property type="match status" value="1"/>
</dbReference>
<dbReference type="FunFam" id="1.10.420.10:FF:000004">
    <property type="entry name" value="Catalase-peroxidase"/>
    <property type="match status" value="1"/>
</dbReference>
<dbReference type="FunFam" id="1.10.520.10:FF:000002">
    <property type="entry name" value="Catalase-peroxidase"/>
    <property type="match status" value="1"/>
</dbReference>
<dbReference type="Gene3D" id="1.10.520.10">
    <property type="match status" value="2"/>
</dbReference>
<dbReference type="Gene3D" id="1.10.420.10">
    <property type="entry name" value="Peroxidase, domain 2"/>
    <property type="match status" value="2"/>
</dbReference>
<dbReference type="HAMAP" id="MF_01961">
    <property type="entry name" value="Catal_peroxid"/>
    <property type="match status" value="1"/>
</dbReference>
<dbReference type="InterPro" id="IPR000763">
    <property type="entry name" value="Catalase_peroxidase"/>
</dbReference>
<dbReference type="InterPro" id="IPR002016">
    <property type="entry name" value="Haem_peroxidase"/>
</dbReference>
<dbReference type="InterPro" id="IPR010255">
    <property type="entry name" value="Haem_peroxidase_sf"/>
</dbReference>
<dbReference type="InterPro" id="IPR019794">
    <property type="entry name" value="Peroxidases_AS"/>
</dbReference>
<dbReference type="NCBIfam" id="TIGR00198">
    <property type="entry name" value="cat_per_HPI"/>
    <property type="match status" value="1"/>
</dbReference>
<dbReference type="NCBIfam" id="NF011635">
    <property type="entry name" value="PRK15061.1"/>
    <property type="match status" value="1"/>
</dbReference>
<dbReference type="PANTHER" id="PTHR30555:SF0">
    <property type="entry name" value="CATALASE-PEROXIDASE"/>
    <property type="match status" value="1"/>
</dbReference>
<dbReference type="PANTHER" id="PTHR30555">
    <property type="entry name" value="HYDROPEROXIDASE I, BIFUNCTIONAL CATALASE-PEROXIDASE"/>
    <property type="match status" value="1"/>
</dbReference>
<dbReference type="Pfam" id="PF00141">
    <property type="entry name" value="peroxidase"/>
    <property type="match status" value="2"/>
</dbReference>
<dbReference type="PRINTS" id="PR00460">
    <property type="entry name" value="BPEROXIDASE"/>
</dbReference>
<dbReference type="PRINTS" id="PR00458">
    <property type="entry name" value="PEROXIDASE"/>
</dbReference>
<dbReference type="SUPFAM" id="SSF48113">
    <property type="entry name" value="Heme-dependent peroxidases"/>
    <property type="match status" value="2"/>
</dbReference>
<dbReference type="PROSITE" id="PS00436">
    <property type="entry name" value="PEROXIDASE_2"/>
    <property type="match status" value="1"/>
</dbReference>
<dbReference type="PROSITE" id="PS50873">
    <property type="entry name" value="PEROXIDASE_4"/>
    <property type="match status" value="2"/>
</dbReference>